<sequence length="346" mass="37679">MEYLKDISSSLSGWEFNFAPGWQSVTASVLLVAGGWFVVSRVWTFLRVLTSLFVLPGKSLRSFGPKGSWAIVTGASDGLGKEFALQIARAGYNIVLVSRTASKLTALTDEITSKYPSVQTKMLAMDFARNLDEDYEKLKALIQDLDVAILINNVGKSHSIPVPFALTPEDELADIITINCMGTLRVTQLVVPGMTQRKRGLILTMGSFGGLVPSPLLATYSGSKAFLQQWSTALGSELQPYGITVELVQAYLITSAMSKIRKTSALIPNPRAFVKATLSKIGNNGGSPGYAYSSSPYWSHGLVAYLATCVINPMSKWLANQNKAMHESIRKRALRKAERENAKKSS</sequence>
<name>MKAR_EMENI</name>
<proteinExistence type="inferred from homology"/>
<evidence type="ECO:0000250" key="1">
    <source>
        <dbReference type="UniProtKB" id="L0E2Z4"/>
    </source>
</evidence>
<evidence type="ECO:0000250" key="2">
    <source>
        <dbReference type="UniProtKB" id="O93868"/>
    </source>
</evidence>
<evidence type="ECO:0000250" key="3">
    <source>
        <dbReference type="UniProtKB" id="P38286"/>
    </source>
</evidence>
<evidence type="ECO:0000255" key="4">
    <source>
        <dbReference type="HAMAP-Rule" id="MF_03107"/>
    </source>
</evidence>
<feature type="chain" id="PRO_0000357309" description="Very-long-chain 3-oxoacyl-CoA reductase">
    <location>
        <begin position="1"/>
        <end position="346"/>
    </location>
</feature>
<feature type="transmembrane region" description="Helical" evidence="4">
    <location>
        <begin position="26"/>
        <end position="46"/>
    </location>
</feature>
<feature type="active site" description="Proton donor" evidence="2">
    <location>
        <position position="220"/>
    </location>
</feature>
<feature type="active site" description="Lowers pKa of active site Tyr" evidence="2">
    <location>
        <position position="224"/>
    </location>
</feature>
<feature type="binding site" evidence="1">
    <location>
        <position position="71"/>
    </location>
    <ligand>
        <name>NADP(+)</name>
        <dbReference type="ChEBI" id="CHEBI:58349"/>
    </ligand>
</feature>
<feature type="binding site" evidence="1">
    <location>
        <position position="126"/>
    </location>
    <ligand>
        <name>NADP(+)</name>
        <dbReference type="ChEBI" id="CHEBI:58349"/>
    </ligand>
</feature>
<feature type="binding site" evidence="1">
    <location>
        <position position="134"/>
    </location>
    <ligand>
        <name>NADP(+)</name>
        <dbReference type="ChEBI" id="CHEBI:58349"/>
    </ligand>
</feature>
<feature type="binding site" evidence="2">
    <location>
        <position position="153"/>
    </location>
    <ligand>
        <name>NADP(+)</name>
        <dbReference type="ChEBI" id="CHEBI:58349"/>
    </ligand>
</feature>
<feature type="binding site" evidence="2">
    <location>
        <position position="220"/>
    </location>
    <ligand>
        <name>NADP(+)</name>
        <dbReference type="ChEBI" id="CHEBI:58349"/>
    </ligand>
</feature>
<feature type="binding site" evidence="2">
    <location>
        <position position="224"/>
    </location>
    <ligand>
        <name>NADP(+)</name>
        <dbReference type="ChEBI" id="CHEBI:58349"/>
    </ligand>
</feature>
<feature type="binding site" evidence="2">
    <location>
        <position position="253"/>
    </location>
    <ligand>
        <name>NADP(+)</name>
        <dbReference type="ChEBI" id="CHEBI:58349"/>
    </ligand>
</feature>
<feature type="binding site" evidence="1">
    <location>
        <position position="255"/>
    </location>
    <ligand>
        <name>NADP(+)</name>
        <dbReference type="ChEBI" id="CHEBI:58349"/>
    </ligand>
</feature>
<dbReference type="EC" id="1.1.1.330" evidence="4"/>
<dbReference type="EMBL" id="AACD01000100">
    <property type="protein sequence ID" value="EAA58370.1"/>
    <property type="molecule type" value="Genomic_DNA"/>
</dbReference>
<dbReference type="EMBL" id="BN001301">
    <property type="protein sequence ID" value="CBF70688.1"/>
    <property type="molecule type" value="Genomic_DNA"/>
</dbReference>
<dbReference type="RefSeq" id="XP_663465.1">
    <property type="nucleotide sequence ID" value="XM_658373.1"/>
</dbReference>
<dbReference type="SMR" id="Q5B0R9"/>
<dbReference type="FunCoup" id="Q5B0R9">
    <property type="interactions" value="727"/>
</dbReference>
<dbReference type="STRING" id="227321.Q5B0R9"/>
<dbReference type="EnsemblFungi" id="CBF70688">
    <property type="protein sequence ID" value="CBF70688"/>
    <property type="gene ID" value="ANIA_05861"/>
</dbReference>
<dbReference type="KEGG" id="ani:ANIA_05861"/>
<dbReference type="VEuPathDB" id="FungiDB:AN5861"/>
<dbReference type="eggNOG" id="KOG1014">
    <property type="taxonomic scope" value="Eukaryota"/>
</dbReference>
<dbReference type="HOGENOM" id="CLU_010194_38_0_1"/>
<dbReference type="InParanoid" id="Q5B0R9"/>
<dbReference type="OMA" id="LVAPGMM"/>
<dbReference type="OrthoDB" id="5545019at2759"/>
<dbReference type="UniPathway" id="UPA00094"/>
<dbReference type="Proteomes" id="UP000000560">
    <property type="component" value="Chromosome I"/>
</dbReference>
<dbReference type="GO" id="GO:0005783">
    <property type="term" value="C:endoplasmic reticulum"/>
    <property type="evidence" value="ECO:0000318"/>
    <property type="project" value="GO_Central"/>
</dbReference>
<dbReference type="GO" id="GO:0005789">
    <property type="term" value="C:endoplasmic reticulum membrane"/>
    <property type="evidence" value="ECO:0007669"/>
    <property type="project" value="UniProtKB-SubCell"/>
</dbReference>
<dbReference type="GO" id="GO:0045703">
    <property type="term" value="F:ketoreductase activity"/>
    <property type="evidence" value="ECO:0007669"/>
    <property type="project" value="UniProtKB-UniRule"/>
</dbReference>
<dbReference type="GO" id="GO:0141040">
    <property type="term" value="F:very-long-chain 3-oxoacyl-CoA reductase activity"/>
    <property type="evidence" value="ECO:0007669"/>
    <property type="project" value="UniProtKB-EC"/>
</dbReference>
<dbReference type="GO" id="GO:0030497">
    <property type="term" value="P:fatty acid elongation"/>
    <property type="evidence" value="ECO:0000318"/>
    <property type="project" value="GO_Central"/>
</dbReference>
<dbReference type="GO" id="GO:0044550">
    <property type="term" value="P:secondary metabolite biosynthetic process"/>
    <property type="evidence" value="ECO:0007669"/>
    <property type="project" value="UniProtKB-ARBA"/>
</dbReference>
<dbReference type="GO" id="GO:0030148">
    <property type="term" value="P:sphingolipid biosynthetic process"/>
    <property type="evidence" value="ECO:0007669"/>
    <property type="project" value="EnsemblFungi"/>
</dbReference>
<dbReference type="GO" id="GO:0042761">
    <property type="term" value="P:very long-chain fatty acid biosynthetic process"/>
    <property type="evidence" value="ECO:0007669"/>
    <property type="project" value="EnsemblFungi"/>
</dbReference>
<dbReference type="CDD" id="cd05356">
    <property type="entry name" value="17beta-HSD1_like_SDR_c"/>
    <property type="match status" value="1"/>
</dbReference>
<dbReference type="FunFam" id="3.40.50.720:FF:000317">
    <property type="entry name" value="Very-long-chain 3-oxoacyl-CoA reductase"/>
    <property type="match status" value="1"/>
</dbReference>
<dbReference type="Gene3D" id="3.40.50.720">
    <property type="entry name" value="NAD(P)-binding Rossmann-like Domain"/>
    <property type="match status" value="1"/>
</dbReference>
<dbReference type="HAMAP" id="MF_03107">
    <property type="entry name" value="3_ketoreductase"/>
    <property type="match status" value="1"/>
</dbReference>
<dbReference type="InterPro" id="IPR027533">
    <property type="entry name" value="3_ketoreductase_fungal"/>
</dbReference>
<dbReference type="InterPro" id="IPR036291">
    <property type="entry name" value="NAD(P)-bd_dom_sf"/>
</dbReference>
<dbReference type="InterPro" id="IPR020904">
    <property type="entry name" value="Sc_DH/Rdtase_CS"/>
</dbReference>
<dbReference type="InterPro" id="IPR002347">
    <property type="entry name" value="SDR_fam"/>
</dbReference>
<dbReference type="PANTHER" id="PTHR43086:SF2">
    <property type="entry name" value="HYDROXYSTEROID DEHYDROGENASE-LIKE PROTEIN 1"/>
    <property type="match status" value="1"/>
</dbReference>
<dbReference type="PANTHER" id="PTHR43086">
    <property type="entry name" value="VERY-LONG-CHAIN 3-OXOOACYL-COA REDUCTASE"/>
    <property type="match status" value="1"/>
</dbReference>
<dbReference type="Pfam" id="PF00106">
    <property type="entry name" value="adh_short"/>
    <property type="match status" value="1"/>
</dbReference>
<dbReference type="PIRSF" id="PIRSF000126">
    <property type="entry name" value="11-beta-HSD1"/>
    <property type="match status" value="1"/>
</dbReference>
<dbReference type="PRINTS" id="PR00081">
    <property type="entry name" value="GDHRDH"/>
</dbReference>
<dbReference type="SUPFAM" id="SSF51735">
    <property type="entry name" value="NAD(P)-binding Rossmann-fold domains"/>
    <property type="match status" value="1"/>
</dbReference>
<dbReference type="PROSITE" id="PS00061">
    <property type="entry name" value="ADH_SHORT"/>
    <property type="match status" value="1"/>
</dbReference>
<gene>
    <name type="ORF">AN5861</name>
</gene>
<comment type="function">
    <text evidence="4">Component of the microsomal membrane bound fatty acid elongation system, which produces the 26-carbon very long-chain fatty acids (VLCFA) from palmitate. Catalyzes the reduction of the 3-ketoacyl-CoA intermediate that is formed in each cycle of fatty acid elongation. VLCFAs serve as precursors for ceramide and sphingolipids.</text>
</comment>
<comment type="catalytic activity">
    <reaction evidence="4">
        <text>a very-long-chain (3R)-3-hydroxyacyl-CoA + NADP(+) = a very-long-chain 3-oxoacyl-CoA + NADPH + H(+)</text>
        <dbReference type="Rhea" id="RHEA:48680"/>
        <dbReference type="ChEBI" id="CHEBI:15378"/>
        <dbReference type="ChEBI" id="CHEBI:57783"/>
        <dbReference type="ChEBI" id="CHEBI:58349"/>
        <dbReference type="ChEBI" id="CHEBI:85440"/>
        <dbReference type="ChEBI" id="CHEBI:90725"/>
        <dbReference type="EC" id="1.1.1.330"/>
    </reaction>
</comment>
<comment type="pathway">
    <text evidence="3">Lipid metabolism; fatty acid biosynthesis.</text>
</comment>
<comment type="subcellular location">
    <subcellularLocation>
        <location evidence="4">Endoplasmic reticulum membrane</location>
        <topology evidence="4">Single-pass membrane protein</topology>
    </subcellularLocation>
</comment>
<comment type="similarity">
    <text evidence="4">Belongs to the short-chain dehydrogenases/reductases (SDR) family.</text>
</comment>
<organism>
    <name type="scientific">Emericella nidulans (strain FGSC A4 / ATCC 38163 / CBS 112.46 / NRRL 194 / M139)</name>
    <name type="common">Aspergillus nidulans</name>
    <dbReference type="NCBI Taxonomy" id="227321"/>
    <lineage>
        <taxon>Eukaryota</taxon>
        <taxon>Fungi</taxon>
        <taxon>Dikarya</taxon>
        <taxon>Ascomycota</taxon>
        <taxon>Pezizomycotina</taxon>
        <taxon>Eurotiomycetes</taxon>
        <taxon>Eurotiomycetidae</taxon>
        <taxon>Eurotiales</taxon>
        <taxon>Aspergillaceae</taxon>
        <taxon>Aspergillus</taxon>
        <taxon>Aspergillus subgen. Nidulantes</taxon>
    </lineage>
</organism>
<accession>Q5B0R9</accession>
<accession>C8UZZ6</accession>
<protein>
    <recommendedName>
        <fullName evidence="4">Very-long-chain 3-oxoacyl-CoA reductase</fullName>
        <ecNumber evidence="4">1.1.1.330</ecNumber>
    </recommendedName>
    <alternativeName>
        <fullName evidence="4">3-ketoacyl-CoA reductase</fullName>
        <shortName evidence="4">3-ketoreductase</shortName>
        <shortName evidence="4">KAR</shortName>
    </alternativeName>
    <alternativeName>
        <fullName evidence="4">Microsomal beta-keto-reductase</fullName>
    </alternativeName>
</protein>
<reference key="1">
    <citation type="journal article" date="2005" name="Nature">
        <title>Sequencing of Aspergillus nidulans and comparative analysis with A. fumigatus and A. oryzae.</title>
        <authorList>
            <person name="Galagan J.E."/>
            <person name="Calvo S.E."/>
            <person name="Cuomo C."/>
            <person name="Ma L.-J."/>
            <person name="Wortman J.R."/>
            <person name="Batzoglou S."/>
            <person name="Lee S.-I."/>
            <person name="Bastuerkmen M."/>
            <person name="Spevak C.C."/>
            <person name="Clutterbuck J."/>
            <person name="Kapitonov V."/>
            <person name="Jurka J."/>
            <person name="Scazzocchio C."/>
            <person name="Farman M.L."/>
            <person name="Butler J."/>
            <person name="Purcell S."/>
            <person name="Harris S."/>
            <person name="Braus G.H."/>
            <person name="Draht O."/>
            <person name="Busch S."/>
            <person name="D'Enfert C."/>
            <person name="Bouchier C."/>
            <person name="Goldman G.H."/>
            <person name="Bell-Pedersen D."/>
            <person name="Griffiths-Jones S."/>
            <person name="Doonan J.H."/>
            <person name="Yu J."/>
            <person name="Vienken K."/>
            <person name="Pain A."/>
            <person name="Freitag M."/>
            <person name="Selker E.U."/>
            <person name="Archer D.B."/>
            <person name="Penalva M.A."/>
            <person name="Oakley B.R."/>
            <person name="Momany M."/>
            <person name="Tanaka T."/>
            <person name="Kumagai T."/>
            <person name="Asai K."/>
            <person name="Machida M."/>
            <person name="Nierman W.C."/>
            <person name="Denning D.W."/>
            <person name="Caddick M.X."/>
            <person name="Hynes M."/>
            <person name="Paoletti M."/>
            <person name="Fischer R."/>
            <person name="Miller B.L."/>
            <person name="Dyer P.S."/>
            <person name="Sachs M.S."/>
            <person name="Osmani S.A."/>
            <person name="Birren B.W."/>
        </authorList>
    </citation>
    <scope>NUCLEOTIDE SEQUENCE [LARGE SCALE GENOMIC DNA]</scope>
    <source>
        <strain>FGSC A4 / ATCC 38163 / CBS 112.46 / NRRL 194 / M139</strain>
    </source>
</reference>
<reference key="2">
    <citation type="journal article" date="2009" name="Fungal Genet. Biol.">
        <title>The 2008 update of the Aspergillus nidulans genome annotation: a community effort.</title>
        <authorList>
            <person name="Wortman J.R."/>
            <person name="Gilsenan J.M."/>
            <person name="Joardar V."/>
            <person name="Deegan J."/>
            <person name="Clutterbuck J."/>
            <person name="Andersen M.R."/>
            <person name="Archer D."/>
            <person name="Bencina M."/>
            <person name="Braus G."/>
            <person name="Coutinho P."/>
            <person name="von Dohren H."/>
            <person name="Doonan J."/>
            <person name="Driessen A.J."/>
            <person name="Durek P."/>
            <person name="Espeso E."/>
            <person name="Fekete E."/>
            <person name="Flipphi M."/>
            <person name="Estrada C.G."/>
            <person name="Geysens S."/>
            <person name="Goldman G."/>
            <person name="de Groot P.W."/>
            <person name="Hansen K."/>
            <person name="Harris S.D."/>
            <person name="Heinekamp T."/>
            <person name="Helmstaedt K."/>
            <person name="Henrissat B."/>
            <person name="Hofmann G."/>
            <person name="Homan T."/>
            <person name="Horio T."/>
            <person name="Horiuchi H."/>
            <person name="James S."/>
            <person name="Jones M."/>
            <person name="Karaffa L."/>
            <person name="Karanyi Z."/>
            <person name="Kato M."/>
            <person name="Keller N."/>
            <person name="Kelly D.E."/>
            <person name="Kiel J.A."/>
            <person name="Kim J.M."/>
            <person name="van der Klei I.J."/>
            <person name="Klis F.M."/>
            <person name="Kovalchuk A."/>
            <person name="Krasevec N."/>
            <person name="Kubicek C.P."/>
            <person name="Liu B."/>
            <person name="Maccabe A."/>
            <person name="Meyer V."/>
            <person name="Mirabito P."/>
            <person name="Miskei M."/>
            <person name="Mos M."/>
            <person name="Mullins J."/>
            <person name="Nelson D.R."/>
            <person name="Nielsen J."/>
            <person name="Oakley B.R."/>
            <person name="Osmani S.A."/>
            <person name="Pakula T."/>
            <person name="Paszewski A."/>
            <person name="Paulsen I."/>
            <person name="Pilsyk S."/>
            <person name="Pocsi I."/>
            <person name="Punt P.J."/>
            <person name="Ram A.F."/>
            <person name="Ren Q."/>
            <person name="Robellet X."/>
            <person name="Robson G."/>
            <person name="Seiboth B."/>
            <person name="van Solingen P."/>
            <person name="Specht T."/>
            <person name="Sun J."/>
            <person name="Taheri-Talesh N."/>
            <person name="Takeshita N."/>
            <person name="Ussery D."/>
            <person name="vanKuyk P.A."/>
            <person name="Visser H."/>
            <person name="van de Vondervoort P.J."/>
            <person name="de Vries R.P."/>
            <person name="Walton J."/>
            <person name="Xiang X."/>
            <person name="Xiong Y."/>
            <person name="Zeng A.P."/>
            <person name="Brandt B.W."/>
            <person name="Cornell M.J."/>
            <person name="van den Hondel C.A."/>
            <person name="Visser J."/>
            <person name="Oliver S.G."/>
            <person name="Turner G."/>
        </authorList>
    </citation>
    <scope>GENOME REANNOTATION</scope>
    <source>
        <strain>FGSC A4 / ATCC 38163 / CBS 112.46 / NRRL 194 / M139</strain>
    </source>
</reference>
<keyword id="KW-0256">Endoplasmic reticulum</keyword>
<keyword id="KW-0275">Fatty acid biosynthesis</keyword>
<keyword id="KW-0276">Fatty acid metabolism</keyword>
<keyword id="KW-0444">Lipid biosynthesis</keyword>
<keyword id="KW-0443">Lipid metabolism</keyword>
<keyword id="KW-0472">Membrane</keyword>
<keyword id="KW-0521">NADP</keyword>
<keyword id="KW-0560">Oxidoreductase</keyword>
<keyword id="KW-1185">Reference proteome</keyword>
<keyword id="KW-0812">Transmembrane</keyword>
<keyword id="KW-1133">Transmembrane helix</keyword>